<reference key="1">
    <citation type="journal article" date="2005" name="PLoS Biol.">
        <title>The genome sequence of Rickettsia felis identifies the first putative conjugative plasmid in an obligate intracellular parasite.</title>
        <authorList>
            <person name="Ogata H."/>
            <person name="Renesto P."/>
            <person name="Audic S."/>
            <person name="Robert C."/>
            <person name="Blanc G."/>
            <person name="Fournier P.-E."/>
            <person name="Parinello H."/>
            <person name="Claverie J.-M."/>
            <person name="Raoult D."/>
        </authorList>
    </citation>
    <scope>NUCLEOTIDE SEQUENCE [LARGE SCALE GENOMIC DNA]</scope>
    <source>
        <strain>ATCC VR-1525 / URRWXCal2</strain>
    </source>
</reference>
<evidence type="ECO:0000250" key="1"/>
<name>ODPB_RICFE</name>
<protein>
    <recommendedName>
        <fullName>Pyruvate dehydrogenase E1 component subunit beta</fullName>
        <ecNumber>1.2.4.1</ecNumber>
    </recommendedName>
</protein>
<proteinExistence type="inferred from homology"/>
<sequence>MQITVREALRDAMQEEMIRDDKVFVMGEEVAEYQGAYKVTQGLLEQFGPKRVIDTPITEYGFAGLAVGAAFAGLRPIVEFMTFNFAMQAFDHIVNSAAKTHYMSGGQAKCPIVFRGPNGAASRVAAQHSQNYTACYSHVPGLKVVAPYSAEDHKGLMLTAIRDDNPVIFLENEILYGHSFDVPETIEPIPFGQAKILREGSSVTIVTFSIQVKLALDAANVLQNDNIDCEVIDLRTIKPLDTDTIIESVKKTNRLVIVEEGWFFAGVGASIASIVMKEAFDYLDAPIEIVSGKDVPLPFAVNLEKLALPSESDVIEAVKKVCYYSV</sequence>
<keyword id="KW-0560">Oxidoreductase</keyword>
<keyword id="KW-0670">Pyruvate</keyword>
<keyword id="KW-0786">Thiamine pyrophosphate</keyword>
<accession>Q4UKQ7</accession>
<gene>
    <name type="primary">pdhB</name>
    <name type="ordered locus">RF_1019</name>
</gene>
<dbReference type="EC" id="1.2.4.1"/>
<dbReference type="EMBL" id="CP000053">
    <property type="protein sequence ID" value="AAY61870.1"/>
    <property type="molecule type" value="Genomic_DNA"/>
</dbReference>
<dbReference type="SMR" id="Q4UKQ7"/>
<dbReference type="STRING" id="315456.RF_1019"/>
<dbReference type="KEGG" id="rfe:RF_1019"/>
<dbReference type="eggNOG" id="COG0022">
    <property type="taxonomic scope" value="Bacteria"/>
</dbReference>
<dbReference type="HOGENOM" id="CLU_012907_1_1_5"/>
<dbReference type="OrthoDB" id="9780894at2"/>
<dbReference type="Proteomes" id="UP000008548">
    <property type="component" value="Chromosome"/>
</dbReference>
<dbReference type="GO" id="GO:0004739">
    <property type="term" value="F:pyruvate dehydrogenase (acetyl-transferring) activity"/>
    <property type="evidence" value="ECO:0007669"/>
    <property type="project" value="UniProtKB-EC"/>
</dbReference>
<dbReference type="CDD" id="cd07036">
    <property type="entry name" value="TPP_PYR_E1-PDHc-beta_like"/>
    <property type="match status" value="1"/>
</dbReference>
<dbReference type="FunFam" id="3.40.50.920:FF:000001">
    <property type="entry name" value="Pyruvate dehydrogenase E1 beta subunit"/>
    <property type="match status" value="1"/>
</dbReference>
<dbReference type="FunFam" id="3.40.50.970:FF:000001">
    <property type="entry name" value="Pyruvate dehydrogenase E1 beta subunit"/>
    <property type="match status" value="1"/>
</dbReference>
<dbReference type="Gene3D" id="3.40.50.920">
    <property type="match status" value="1"/>
</dbReference>
<dbReference type="Gene3D" id="3.40.50.970">
    <property type="match status" value="1"/>
</dbReference>
<dbReference type="InterPro" id="IPR029061">
    <property type="entry name" value="THDP-binding"/>
</dbReference>
<dbReference type="InterPro" id="IPR009014">
    <property type="entry name" value="Transketo_C/PFOR_II"/>
</dbReference>
<dbReference type="InterPro" id="IPR005475">
    <property type="entry name" value="Transketolase-like_Pyr-bd"/>
</dbReference>
<dbReference type="InterPro" id="IPR033248">
    <property type="entry name" value="Transketolase_C"/>
</dbReference>
<dbReference type="NCBIfam" id="NF006667">
    <property type="entry name" value="PRK09212.1"/>
    <property type="match status" value="1"/>
</dbReference>
<dbReference type="NCBIfam" id="NF008854">
    <property type="entry name" value="PRK11892.1"/>
    <property type="match status" value="1"/>
</dbReference>
<dbReference type="PANTHER" id="PTHR43257">
    <property type="entry name" value="PYRUVATE DEHYDROGENASE E1 COMPONENT BETA SUBUNIT"/>
    <property type="match status" value="1"/>
</dbReference>
<dbReference type="PANTHER" id="PTHR43257:SF2">
    <property type="entry name" value="PYRUVATE DEHYDROGENASE E1 COMPONENT SUBUNIT BETA"/>
    <property type="match status" value="1"/>
</dbReference>
<dbReference type="Pfam" id="PF02779">
    <property type="entry name" value="Transket_pyr"/>
    <property type="match status" value="1"/>
</dbReference>
<dbReference type="Pfam" id="PF02780">
    <property type="entry name" value="Transketolase_C"/>
    <property type="match status" value="1"/>
</dbReference>
<dbReference type="SMART" id="SM00861">
    <property type="entry name" value="Transket_pyr"/>
    <property type="match status" value="1"/>
</dbReference>
<dbReference type="SUPFAM" id="SSF52518">
    <property type="entry name" value="Thiamin diphosphate-binding fold (THDP-binding)"/>
    <property type="match status" value="1"/>
</dbReference>
<dbReference type="SUPFAM" id="SSF52922">
    <property type="entry name" value="TK C-terminal domain-like"/>
    <property type="match status" value="1"/>
</dbReference>
<organism>
    <name type="scientific">Rickettsia felis (strain ATCC VR-1525 / URRWXCal2)</name>
    <name type="common">Rickettsia azadi</name>
    <dbReference type="NCBI Taxonomy" id="315456"/>
    <lineage>
        <taxon>Bacteria</taxon>
        <taxon>Pseudomonadati</taxon>
        <taxon>Pseudomonadota</taxon>
        <taxon>Alphaproteobacteria</taxon>
        <taxon>Rickettsiales</taxon>
        <taxon>Rickettsiaceae</taxon>
        <taxon>Rickettsieae</taxon>
        <taxon>Rickettsia</taxon>
        <taxon>spotted fever group</taxon>
    </lineage>
</organism>
<feature type="chain" id="PRO_0000288761" description="Pyruvate dehydrogenase E1 component subunit beta">
    <location>
        <begin position="1"/>
        <end position="326"/>
    </location>
</feature>
<feature type="binding site" evidence="1">
    <location>
        <position position="59"/>
    </location>
    <ligand>
        <name>thiamine diphosphate</name>
        <dbReference type="ChEBI" id="CHEBI:58937"/>
    </ligand>
</feature>
<comment type="function">
    <text evidence="1">The pyruvate dehydrogenase complex catalyzes the overall conversion of pyruvate to acetyl-CoA and CO(2). It contains multiple copies of three enzymatic components: pyruvate dehydrogenase (E1), dihydrolipoamide acetyltransferase (E2) and lipoamide dehydrogenase (E3) (By similarity).</text>
</comment>
<comment type="catalytic activity">
    <reaction>
        <text>N(6)-[(R)-lipoyl]-L-lysyl-[protein] + pyruvate + H(+) = N(6)-[(R)-S(8)-acetyldihydrolipoyl]-L-lysyl-[protein] + CO2</text>
        <dbReference type="Rhea" id="RHEA:19189"/>
        <dbReference type="Rhea" id="RHEA-COMP:10474"/>
        <dbReference type="Rhea" id="RHEA-COMP:10478"/>
        <dbReference type="ChEBI" id="CHEBI:15361"/>
        <dbReference type="ChEBI" id="CHEBI:15378"/>
        <dbReference type="ChEBI" id="CHEBI:16526"/>
        <dbReference type="ChEBI" id="CHEBI:83099"/>
        <dbReference type="ChEBI" id="CHEBI:83111"/>
        <dbReference type="EC" id="1.2.4.1"/>
    </reaction>
</comment>
<comment type="cofactor">
    <cofactor evidence="1">
        <name>thiamine diphosphate</name>
        <dbReference type="ChEBI" id="CHEBI:58937"/>
    </cofactor>
</comment>
<comment type="subunit">
    <text>Heterodimer of an alpha and a beta chain.</text>
</comment>